<accession>B2HVA8</accession>
<feature type="chain" id="PRO_1000140083" description="L-aspartate dehydrogenase">
    <location>
        <begin position="1"/>
        <end position="263"/>
    </location>
</feature>
<feature type="active site" evidence="1">
    <location>
        <position position="216"/>
    </location>
</feature>
<feature type="binding site" evidence="1">
    <location>
        <position position="120"/>
    </location>
    <ligand>
        <name>NAD(+)</name>
        <dbReference type="ChEBI" id="CHEBI:57540"/>
    </ligand>
</feature>
<feature type="binding site" evidence="1">
    <location>
        <position position="186"/>
    </location>
    <ligand>
        <name>NAD(+)</name>
        <dbReference type="ChEBI" id="CHEBI:57540"/>
    </ligand>
</feature>
<gene>
    <name evidence="1" type="primary">nadX</name>
    <name type="ordered locus">ACICU_00917</name>
</gene>
<organism>
    <name type="scientific">Acinetobacter baumannii (strain ACICU)</name>
    <dbReference type="NCBI Taxonomy" id="405416"/>
    <lineage>
        <taxon>Bacteria</taxon>
        <taxon>Pseudomonadati</taxon>
        <taxon>Pseudomonadota</taxon>
        <taxon>Gammaproteobacteria</taxon>
        <taxon>Moraxellales</taxon>
        <taxon>Moraxellaceae</taxon>
        <taxon>Acinetobacter</taxon>
        <taxon>Acinetobacter calcoaceticus/baumannii complex</taxon>
    </lineage>
</organism>
<dbReference type="EC" id="1.4.1.21" evidence="1"/>
<dbReference type="EMBL" id="CP000863">
    <property type="protein sequence ID" value="ACC56229.1"/>
    <property type="molecule type" value="Genomic_DNA"/>
</dbReference>
<dbReference type="RefSeq" id="WP_000735778.1">
    <property type="nucleotide sequence ID" value="NZ_CP031380.1"/>
</dbReference>
<dbReference type="SMR" id="B2HVA8"/>
<dbReference type="KEGG" id="abc:ACICU_00917"/>
<dbReference type="HOGENOM" id="CLU_089550_0_0_6"/>
<dbReference type="UniPathway" id="UPA00253">
    <property type="reaction ID" value="UER00456"/>
</dbReference>
<dbReference type="Proteomes" id="UP000008839">
    <property type="component" value="Chromosome"/>
</dbReference>
<dbReference type="GO" id="GO:0033735">
    <property type="term" value="F:aspartate dehydrogenase activity"/>
    <property type="evidence" value="ECO:0007669"/>
    <property type="project" value="UniProtKB-EC"/>
</dbReference>
<dbReference type="GO" id="GO:0051287">
    <property type="term" value="F:NAD binding"/>
    <property type="evidence" value="ECO:0007669"/>
    <property type="project" value="UniProtKB-UniRule"/>
</dbReference>
<dbReference type="GO" id="GO:0050661">
    <property type="term" value="F:NADP binding"/>
    <property type="evidence" value="ECO:0007669"/>
    <property type="project" value="UniProtKB-UniRule"/>
</dbReference>
<dbReference type="GO" id="GO:0016639">
    <property type="term" value="F:oxidoreductase activity, acting on the CH-NH2 group of donors, NAD or NADP as acceptor"/>
    <property type="evidence" value="ECO:0007669"/>
    <property type="project" value="UniProtKB-UniRule"/>
</dbReference>
<dbReference type="GO" id="GO:0009435">
    <property type="term" value="P:NAD biosynthetic process"/>
    <property type="evidence" value="ECO:0007669"/>
    <property type="project" value="UniProtKB-UniRule"/>
</dbReference>
<dbReference type="Gene3D" id="3.30.360.10">
    <property type="entry name" value="Dihydrodipicolinate Reductase, domain 2"/>
    <property type="match status" value="1"/>
</dbReference>
<dbReference type="Gene3D" id="3.40.50.720">
    <property type="entry name" value="NAD(P)-binding Rossmann-like Domain"/>
    <property type="match status" value="1"/>
</dbReference>
<dbReference type="HAMAP" id="MF_01265">
    <property type="entry name" value="NadX"/>
    <property type="match status" value="1"/>
</dbReference>
<dbReference type="InterPro" id="IPR005106">
    <property type="entry name" value="Asp/hSer_DH_NAD-bd"/>
</dbReference>
<dbReference type="InterPro" id="IPR002811">
    <property type="entry name" value="Asp_DH"/>
</dbReference>
<dbReference type="InterPro" id="IPR020626">
    <property type="entry name" value="Asp_DH_prok"/>
</dbReference>
<dbReference type="InterPro" id="IPR011182">
    <property type="entry name" value="L-Asp_DH"/>
</dbReference>
<dbReference type="InterPro" id="IPR036291">
    <property type="entry name" value="NAD(P)-bd_dom_sf"/>
</dbReference>
<dbReference type="NCBIfam" id="NF009827">
    <property type="entry name" value="PRK13303.1-2"/>
    <property type="match status" value="1"/>
</dbReference>
<dbReference type="NCBIfam" id="NF009828">
    <property type="entry name" value="PRK13303.1-3"/>
    <property type="match status" value="1"/>
</dbReference>
<dbReference type="PANTHER" id="PTHR31873:SF6">
    <property type="entry name" value="ASPARTATE DEHYDROGENASE DOMAIN-CONTAINING PROTEIN"/>
    <property type="match status" value="1"/>
</dbReference>
<dbReference type="PANTHER" id="PTHR31873">
    <property type="entry name" value="L-ASPARTATE DEHYDROGENASE-RELATED"/>
    <property type="match status" value="1"/>
</dbReference>
<dbReference type="Pfam" id="PF01958">
    <property type="entry name" value="Asp_DH_C"/>
    <property type="match status" value="1"/>
</dbReference>
<dbReference type="Pfam" id="PF03447">
    <property type="entry name" value="NAD_binding_3"/>
    <property type="match status" value="1"/>
</dbReference>
<dbReference type="PIRSF" id="PIRSF005227">
    <property type="entry name" value="Asp_dh_NAD_syn"/>
    <property type="match status" value="1"/>
</dbReference>
<dbReference type="SUPFAM" id="SSF55347">
    <property type="entry name" value="Glyceraldehyde-3-phosphate dehydrogenase-like, C-terminal domain"/>
    <property type="match status" value="1"/>
</dbReference>
<dbReference type="SUPFAM" id="SSF51735">
    <property type="entry name" value="NAD(P)-binding Rossmann-fold domains"/>
    <property type="match status" value="1"/>
</dbReference>
<comment type="function">
    <text evidence="1">Specifically catalyzes the NAD or NADP-dependent dehydrogenation of L-aspartate to iminoaspartate.</text>
</comment>
<comment type="catalytic activity">
    <reaction evidence="1">
        <text>L-aspartate + NADP(+) + H2O = oxaloacetate + NH4(+) + NADPH + H(+)</text>
        <dbReference type="Rhea" id="RHEA:11784"/>
        <dbReference type="ChEBI" id="CHEBI:15377"/>
        <dbReference type="ChEBI" id="CHEBI:15378"/>
        <dbReference type="ChEBI" id="CHEBI:16452"/>
        <dbReference type="ChEBI" id="CHEBI:28938"/>
        <dbReference type="ChEBI" id="CHEBI:29991"/>
        <dbReference type="ChEBI" id="CHEBI:57783"/>
        <dbReference type="ChEBI" id="CHEBI:58349"/>
        <dbReference type="EC" id="1.4.1.21"/>
    </reaction>
</comment>
<comment type="catalytic activity">
    <reaction evidence="1">
        <text>L-aspartate + NAD(+) + H2O = oxaloacetate + NH4(+) + NADH + H(+)</text>
        <dbReference type="Rhea" id="RHEA:11788"/>
        <dbReference type="ChEBI" id="CHEBI:15377"/>
        <dbReference type="ChEBI" id="CHEBI:15378"/>
        <dbReference type="ChEBI" id="CHEBI:16452"/>
        <dbReference type="ChEBI" id="CHEBI:28938"/>
        <dbReference type="ChEBI" id="CHEBI:29991"/>
        <dbReference type="ChEBI" id="CHEBI:57540"/>
        <dbReference type="ChEBI" id="CHEBI:57945"/>
        <dbReference type="EC" id="1.4.1.21"/>
    </reaction>
</comment>
<comment type="pathway">
    <text evidence="1">Cofactor biosynthesis; NAD(+) biosynthesis; iminoaspartate from L-aspartate (dehydrogenase route): step 1/1.</text>
</comment>
<comment type="miscellaneous">
    <text evidence="1">The iminoaspartate product is unstable in aqueous solution and can decompose to oxaloacetate and ammonia.</text>
</comment>
<comment type="similarity">
    <text evidence="1">Belongs to the L-aspartate dehydrogenase family.</text>
</comment>
<proteinExistence type="inferred from homology"/>
<reference key="1">
    <citation type="journal article" date="2008" name="Antimicrob. Agents Chemother.">
        <title>Whole-genome pyrosequencing of an epidemic multidrug-resistant Acinetobacter baumannii strain belonging to the European clone II group.</title>
        <authorList>
            <person name="Iacono M."/>
            <person name="Villa L."/>
            <person name="Fortini D."/>
            <person name="Bordoni R."/>
            <person name="Imperi F."/>
            <person name="Bonnal R.J."/>
            <person name="Sicheritz-Ponten T."/>
            <person name="De Bellis G."/>
            <person name="Visca P."/>
            <person name="Cassone A."/>
            <person name="Carattoli A."/>
        </authorList>
    </citation>
    <scope>NUCLEOTIDE SEQUENCE [LARGE SCALE GENOMIC DNA]</scope>
    <source>
        <strain>ACICU</strain>
    </source>
</reference>
<name>ASPD_ACIBC</name>
<evidence type="ECO:0000255" key="1">
    <source>
        <dbReference type="HAMAP-Rule" id="MF_01265"/>
    </source>
</evidence>
<sequence length="263" mass="27954">MKKLMMIGFGAMAAEVYAHLPQDLQLKWIVVPSRSIEKVQSQVSSDIQVISDIEQCDGTPDYVIEVAGQAAVKEHAQKVLAKGWTIGLISVGTLADSEFLVQLKQTAEKNDAHLHLLAGAIAGIDGISAAKEGGLQKVTYKGCKSPKSWKGSYAEQLVDLDHVSEPTVFFTGTAREAAMKFPANANVAATIALAGLGMDETMVELTVDPTINKNKHTIVAEGGFGQMTIELVGVPLPSNPKTSTLAALSVIRACRNSVEAIQI</sequence>
<keyword id="KW-0520">NAD</keyword>
<keyword id="KW-0521">NADP</keyword>
<keyword id="KW-0560">Oxidoreductase</keyword>
<keyword id="KW-0662">Pyridine nucleotide biosynthesis</keyword>
<protein>
    <recommendedName>
        <fullName evidence="1">L-aspartate dehydrogenase</fullName>
        <ecNumber evidence="1">1.4.1.21</ecNumber>
    </recommendedName>
</protein>